<gene>
    <name type="primary">Ca15</name>
    <name type="synonym">Car15</name>
</gene>
<sequence>MWALDFLLSFLLIQLAAQVDSSGTWCYDSQDPKCGPAHWKELAPACGGPTQSPINIDLRLVQRDYTLKPFIFQGYDSAPQDPWVLENDGHTVLLRVNSCQQNCPAIRGAGLPSPEYRLLQLHFHWGSPGHQGSEHSLDEKHGSMEMHMVHMNTKYQSMEDARSQPDGFAILAVLLVEEDRDNTNFSAIVSGLKNLSSPGVAVNLTSTFALASLLPSALRLLRYYRYSGSLTTPGCEPAVLWTVFENTVPIGHAQVVQFQAVLQTGPPGLHPRPLTSNFRPQQPLGGRRISASPEASVRSSVSTLPCLHLALVGLGVGLRLWQGP</sequence>
<dbReference type="EC" id="4.2.1.1"/>
<dbReference type="EMBL" id="AF231122">
    <property type="protein sequence ID" value="AAK16671.1"/>
    <property type="molecule type" value="mRNA"/>
</dbReference>
<dbReference type="EMBL" id="BC019975">
    <property type="protein sequence ID" value="AAH19975.1"/>
    <property type="molecule type" value="mRNA"/>
</dbReference>
<dbReference type="CCDS" id="CCDS49784.1"/>
<dbReference type="RefSeq" id="NP_085035.1">
    <property type="nucleotide sequence ID" value="NM_030558.2"/>
</dbReference>
<dbReference type="SMR" id="Q99N23"/>
<dbReference type="FunCoup" id="Q99N23">
    <property type="interactions" value="124"/>
</dbReference>
<dbReference type="STRING" id="10090.ENSMUSP00000113400"/>
<dbReference type="BindingDB" id="Q99N23"/>
<dbReference type="ChEMBL" id="CHEMBL5973"/>
<dbReference type="DrugCentral" id="Q99N23"/>
<dbReference type="GlyCosmos" id="Q99N23">
    <property type="glycosylation" value="3 sites, No reported glycans"/>
</dbReference>
<dbReference type="GlyGen" id="Q99N23">
    <property type="glycosylation" value="4 sites"/>
</dbReference>
<dbReference type="PhosphoSitePlus" id="Q99N23"/>
<dbReference type="jPOST" id="Q99N23"/>
<dbReference type="PaxDb" id="10090-ENSMUSP00000113400"/>
<dbReference type="ProteomicsDB" id="273898"/>
<dbReference type="DNASU" id="80733"/>
<dbReference type="Ensembl" id="ENSMUST00000118960.2">
    <property type="protein sequence ID" value="ENSMUSP00000113400.2"/>
    <property type="gene ID" value="ENSMUSG00000090236.4"/>
</dbReference>
<dbReference type="GeneID" id="80733"/>
<dbReference type="KEGG" id="mmu:80733"/>
<dbReference type="UCSC" id="uc007ymg.1">
    <property type="organism name" value="mouse"/>
</dbReference>
<dbReference type="AGR" id="MGI:1931324"/>
<dbReference type="CTD" id="80733"/>
<dbReference type="MGI" id="MGI:1931324">
    <property type="gene designation" value="Car15"/>
</dbReference>
<dbReference type="VEuPathDB" id="HostDB:ENSMUSG00000090236"/>
<dbReference type="eggNOG" id="KOG0382">
    <property type="taxonomic scope" value="Eukaryota"/>
</dbReference>
<dbReference type="GeneTree" id="ENSGT00940000162972"/>
<dbReference type="HOGENOM" id="CLU_039326_2_0_1"/>
<dbReference type="InParanoid" id="Q99N23"/>
<dbReference type="OMA" id="HMVHMNT"/>
<dbReference type="OrthoDB" id="429145at2759"/>
<dbReference type="PhylomeDB" id="Q99N23"/>
<dbReference type="TreeFam" id="TF316425"/>
<dbReference type="BRENDA" id="4.2.1.1">
    <property type="organism ID" value="3474"/>
</dbReference>
<dbReference type="SABIO-RK" id="Q99N23"/>
<dbReference type="BioGRID-ORCS" id="80733">
    <property type="hits" value="2 hits in 77 CRISPR screens"/>
</dbReference>
<dbReference type="PRO" id="PR:Q99N23"/>
<dbReference type="Proteomes" id="UP000000589">
    <property type="component" value="Chromosome 16"/>
</dbReference>
<dbReference type="RNAct" id="Q99N23">
    <property type="molecule type" value="protein"/>
</dbReference>
<dbReference type="Bgee" id="ENSMUSG00000090236">
    <property type="expression patterns" value="Expressed in islet of Langerhans and 105 other cell types or tissues"/>
</dbReference>
<dbReference type="GO" id="GO:0005576">
    <property type="term" value="C:extracellular region"/>
    <property type="evidence" value="ECO:0007669"/>
    <property type="project" value="UniProtKB-SubCell"/>
</dbReference>
<dbReference type="GO" id="GO:0016020">
    <property type="term" value="C:membrane"/>
    <property type="evidence" value="ECO:0000314"/>
    <property type="project" value="MGI"/>
</dbReference>
<dbReference type="GO" id="GO:0005886">
    <property type="term" value="C:plasma membrane"/>
    <property type="evidence" value="ECO:0000314"/>
    <property type="project" value="MGI"/>
</dbReference>
<dbReference type="GO" id="GO:0004089">
    <property type="term" value="F:carbonate dehydratase activity"/>
    <property type="evidence" value="ECO:0000314"/>
    <property type="project" value="MGI"/>
</dbReference>
<dbReference type="GO" id="GO:0008270">
    <property type="term" value="F:zinc ion binding"/>
    <property type="evidence" value="ECO:0007669"/>
    <property type="project" value="InterPro"/>
</dbReference>
<dbReference type="CDD" id="cd03117">
    <property type="entry name" value="alpha_CA_IV_XV_like"/>
    <property type="match status" value="1"/>
</dbReference>
<dbReference type="FunFam" id="3.10.200.10:FF:000003">
    <property type="entry name" value="Carbonic anhydrase 12"/>
    <property type="match status" value="1"/>
</dbReference>
<dbReference type="Gene3D" id="3.10.200.10">
    <property type="entry name" value="Alpha carbonic anhydrase"/>
    <property type="match status" value="1"/>
</dbReference>
<dbReference type="InterPro" id="IPR041874">
    <property type="entry name" value="CA4/CA15"/>
</dbReference>
<dbReference type="InterPro" id="IPR001148">
    <property type="entry name" value="CA_dom"/>
</dbReference>
<dbReference type="InterPro" id="IPR036398">
    <property type="entry name" value="CA_dom_sf"/>
</dbReference>
<dbReference type="InterPro" id="IPR023561">
    <property type="entry name" value="Carbonic_anhydrase_a-class"/>
</dbReference>
<dbReference type="PANTHER" id="PTHR18952">
    <property type="entry name" value="CARBONIC ANHYDRASE"/>
    <property type="match status" value="1"/>
</dbReference>
<dbReference type="PANTHER" id="PTHR18952:SF134">
    <property type="entry name" value="CARBONIC ANHYDRASE 15"/>
    <property type="match status" value="1"/>
</dbReference>
<dbReference type="Pfam" id="PF00194">
    <property type="entry name" value="Carb_anhydrase"/>
    <property type="match status" value="1"/>
</dbReference>
<dbReference type="SMART" id="SM01057">
    <property type="entry name" value="Carb_anhydrase"/>
    <property type="match status" value="1"/>
</dbReference>
<dbReference type="SUPFAM" id="SSF51069">
    <property type="entry name" value="Carbonic anhydrase"/>
    <property type="match status" value="1"/>
</dbReference>
<dbReference type="PROSITE" id="PS51144">
    <property type="entry name" value="ALPHA_CA_2"/>
    <property type="match status" value="1"/>
</dbReference>
<reference key="1">
    <citation type="submission" date="2000-02" db="EMBL/GenBank/DDBJ databases">
        <title>Characterization and evolution of two new members of the alpha-carbonic anhydrase gene family in mouse: Car13 and Car15.</title>
        <authorList>
            <person name="Hewett-Emmett D."/>
            <person name="Shimmin L.C."/>
        </authorList>
    </citation>
    <scope>NUCLEOTIDE SEQUENCE [MRNA]</scope>
    <source>
        <strain>C57BL/6J</strain>
        <tissue>Kidney</tissue>
    </source>
</reference>
<reference key="2">
    <citation type="journal article" date="2004" name="Genome Res.">
        <title>The status, quality, and expansion of the NIH full-length cDNA project: the Mammalian Gene Collection (MGC).</title>
        <authorList>
            <consortium name="The MGC Project Team"/>
        </authorList>
    </citation>
    <scope>NUCLEOTIDE SEQUENCE [LARGE SCALE MRNA]</scope>
    <source>
        <tissue>Kidney</tissue>
    </source>
</reference>
<reference key="3">
    <citation type="journal article" date="2009" name="J. Am. Chem. Soc.">
        <title>Non-zinc mediated inhibition of carbonic anhydrases: coumarins are a new class of suicide inhibitors.</title>
        <authorList>
            <person name="Maresca A."/>
            <person name="Temperini C."/>
            <person name="Vu H."/>
            <person name="Pham N.B."/>
            <person name="Poulsen S.-A."/>
            <person name="Scozzafava A."/>
            <person name="Quinn R.J."/>
            <person name="Supuran C.T."/>
        </authorList>
    </citation>
    <scope>ACTIVITY REGULATION</scope>
</reference>
<reference key="4">
    <citation type="journal article" date="2010" name="Cell">
        <title>A tissue-specific atlas of mouse protein phosphorylation and expression.</title>
        <authorList>
            <person name="Huttlin E.L."/>
            <person name="Jedrychowski M.P."/>
            <person name="Elias J.E."/>
            <person name="Goswami T."/>
            <person name="Rad R."/>
            <person name="Beausoleil S.A."/>
            <person name="Villen J."/>
            <person name="Haas W."/>
            <person name="Sowa M.E."/>
            <person name="Gygi S.P."/>
        </authorList>
    </citation>
    <scope>IDENTIFICATION BY MASS SPECTROMETRY [LARGE SCALE ANALYSIS]</scope>
    <source>
        <tissue>Kidney</tissue>
    </source>
</reference>
<feature type="signal peptide" evidence="2">
    <location>
        <begin position="1"/>
        <end position="18"/>
    </location>
</feature>
<feature type="chain" id="PRO_0000004253" description="Carbonic anhydrase 15">
    <location>
        <begin position="19"/>
        <end position="324"/>
    </location>
</feature>
<feature type="domain" description="Alpha-carbonic anhydrase" evidence="3">
    <location>
        <begin position="23"/>
        <end position="293"/>
    </location>
</feature>
<feature type="region of interest" description="Disordered" evidence="4">
    <location>
        <begin position="269"/>
        <end position="290"/>
    </location>
</feature>
<feature type="active site" description="Proton acceptor" evidence="3">
    <location>
        <position position="90"/>
    </location>
</feature>
<feature type="active site" evidence="1">
    <location>
        <position position="155"/>
    </location>
</feature>
<feature type="binding site" evidence="3">
    <location>
        <position position="122"/>
    </location>
    <ligand>
        <name>Zn(2+)</name>
        <dbReference type="ChEBI" id="CHEBI:29105"/>
        <note>catalytic</note>
    </ligand>
</feature>
<feature type="binding site" evidence="3">
    <location>
        <position position="124"/>
    </location>
    <ligand>
        <name>Zn(2+)</name>
        <dbReference type="ChEBI" id="CHEBI:29105"/>
        <note>catalytic</note>
    </ligand>
</feature>
<feature type="binding site" evidence="3">
    <location>
        <position position="147"/>
    </location>
    <ligand>
        <name>Zn(2+)</name>
        <dbReference type="ChEBI" id="CHEBI:29105"/>
        <note>catalytic</note>
    </ligand>
</feature>
<feature type="binding site" evidence="1">
    <location>
        <begin position="231"/>
        <end position="232"/>
    </location>
    <ligand>
        <name>substrate</name>
    </ligand>
</feature>
<feature type="glycosylation site" description="N-linked (GlcNAc...) asparagine" evidence="2">
    <location>
        <position position="184"/>
    </location>
</feature>
<feature type="glycosylation site" description="N-linked (GlcNAc...) asparagine" evidence="2">
    <location>
        <position position="194"/>
    </location>
</feature>
<feature type="glycosylation site" description="N-linked (GlcNAc...) asparagine" evidence="2">
    <location>
        <position position="203"/>
    </location>
</feature>
<proteinExistence type="evidence at protein level"/>
<accession>Q99N23</accession>
<keyword id="KW-0325">Glycoprotein</keyword>
<keyword id="KW-0456">Lyase</keyword>
<keyword id="KW-0479">Metal-binding</keyword>
<keyword id="KW-1185">Reference proteome</keyword>
<keyword id="KW-0964">Secreted</keyword>
<keyword id="KW-0732">Signal</keyword>
<keyword id="KW-0862">Zinc</keyword>
<evidence type="ECO:0000250" key="1"/>
<evidence type="ECO:0000255" key="2"/>
<evidence type="ECO:0000255" key="3">
    <source>
        <dbReference type="PROSITE-ProRule" id="PRU01134"/>
    </source>
</evidence>
<evidence type="ECO:0000256" key="4">
    <source>
        <dbReference type="SAM" id="MobiDB-lite"/>
    </source>
</evidence>
<evidence type="ECO:0000269" key="5">
    <source>
    </source>
</evidence>
<evidence type="ECO:0000305" key="6"/>
<name>CAH15_MOUSE</name>
<comment type="function">
    <text evidence="1">Reversible hydration of carbon dioxide.</text>
</comment>
<comment type="catalytic activity">
    <reaction>
        <text>hydrogencarbonate + H(+) = CO2 + H2O</text>
        <dbReference type="Rhea" id="RHEA:10748"/>
        <dbReference type="ChEBI" id="CHEBI:15377"/>
        <dbReference type="ChEBI" id="CHEBI:15378"/>
        <dbReference type="ChEBI" id="CHEBI:16526"/>
        <dbReference type="ChEBI" id="CHEBI:17544"/>
        <dbReference type="EC" id="4.2.1.1"/>
    </reaction>
</comment>
<comment type="cofactor">
    <cofactor evidence="1">
        <name>Zn(2+)</name>
        <dbReference type="ChEBI" id="CHEBI:29105"/>
    </cofactor>
</comment>
<comment type="activity regulation">
    <text evidence="5">Repressed by coumarins.</text>
</comment>
<comment type="subcellular location">
    <subcellularLocation>
        <location evidence="6">Secreted</location>
    </subcellularLocation>
</comment>
<comment type="similarity">
    <text evidence="6">Belongs to the alpha-carbonic anhydrase family.</text>
</comment>
<protein>
    <recommendedName>
        <fullName>Carbonic anhydrase 15</fullName>
        <ecNumber>4.2.1.1</ecNumber>
    </recommendedName>
    <alternativeName>
        <fullName>Carbonate dehydratase XV</fullName>
    </alternativeName>
    <alternativeName>
        <fullName>Carbonic anhydrase XV</fullName>
        <shortName>CA-XV</shortName>
    </alternativeName>
</protein>
<organism>
    <name type="scientific">Mus musculus</name>
    <name type="common">Mouse</name>
    <dbReference type="NCBI Taxonomy" id="10090"/>
    <lineage>
        <taxon>Eukaryota</taxon>
        <taxon>Metazoa</taxon>
        <taxon>Chordata</taxon>
        <taxon>Craniata</taxon>
        <taxon>Vertebrata</taxon>
        <taxon>Euteleostomi</taxon>
        <taxon>Mammalia</taxon>
        <taxon>Eutheria</taxon>
        <taxon>Euarchontoglires</taxon>
        <taxon>Glires</taxon>
        <taxon>Rodentia</taxon>
        <taxon>Myomorpha</taxon>
        <taxon>Muroidea</taxon>
        <taxon>Muridae</taxon>
        <taxon>Murinae</taxon>
        <taxon>Mus</taxon>
        <taxon>Mus</taxon>
    </lineage>
</organism>